<reference key="1">
    <citation type="journal article" date="2001" name="Proc. Natl. Acad. Sci. U.S.A.">
        <title>Genome sequence of an industrial microorganism Streptomyces avermitilis: deducing the ability of producing secondary metabolites.</title>
        <authorList>
            <person name="Omura S."/>
            <person name="Ikeda H."/>
            <person name="Ishikawa J."/>
            <person name="Hanamoto A."/>
            <person name="Takahashi C."/>
            <person name="Shinose M."/>
            <person name="Takahashi Y."/>
            <person name="Horikawa H."/>
            <person name="Nakazawa H."/>
            <person name="Osonoe T."/>
            <person name="Kikuchi H."/>
            <person name="Shiba T."/>
            <person name="Sakaki Y."/>
            <person name="Hattori M."/>
        </authorList>
    </citation>
    <scope>NUCLEOTIDE SEQUENCE [LARGE SCALE GENOMIC DNA]</scope>
    <source>
        <strain>ATCC 31267 / DSM 46492 / JCM 5070 / NBRC 14893 / NCIMB 12804 / NRRL 8165 / MA-4680</strain>
    </source>
</reference>
<reference key="2">
    <citation type="journal article" date="2003" name="Nat. Biotechnol.">
        <title>Complete genome sequence and comparative analysis of the industrial microorganism Streptomyces avermitilis.</title>
        <authorList>
            <person name="Ikeda H."/>
            <person name="Ishikawa J."/>
            <person name="Hanamoto A."/>
            <person name="Shinose M."/>
            <person name="Kikuchi H."/>
            <person name="Shiba T."/>
            <person name="Sakaki Y."/>
            <person name="Hattori M."/>
            <person name="Omura S."/>
        </authorList>
    </citation>
    <scope>NUCLEOTIDE SEQUENCE [LARGE SCALE GENOMIC DNA]</scope>
    <source>
        <strain>ATCC 31267 / DSM 46492 / JCM 5070 / NBRC 14893 / NCIMB 12804 / NRRL 8165 / MA-4680</strain>
    </source>
</reference>
<organism>
    <name type="scientific">Streptomyces avermitilis (strain ATCC 31267 / DSM 46492 / JCM 5070 / NBRC 14893 / NCIMB 12804 / NRRL 8165 / MA-4680)</name>
    <dbReference type="NCBI Taxonomy" id="227882"/>
    <lineage>
        <taxon>Bacteria</taxon>
        <taxon>Bacillati</taxon>
        <taxon>Actinomycetota</taxon>
        <taxon>Actinomycetes</taxon>
        <taxon>Kitasatosporales</taxon>
        <taxon>Streptomycetaceae</taxon>
        <taxon>Streptomyces</taxon>
    </lineage>
</organism>
<evidence type="ECO:0000255" key="1">
    <source>
        <dbReference type="HAMAP-Rule" id="MF_00454"/>
    </source>
</evidence>
<sequence>MNWLLVIAGAMVGAPLRYVTDRMVQLRHDAVFPWGTFAINVTGCLVLGLLTGAASAGVASPHLELLLGTGLCGALTTYSTFSYETLRLTETGAGFYAAANAIASVAAGLGAAFAGVWFAQALWA</sequence>
<protein>
    <recommendedName>
        <fullName evidence="1">Fluoride-specific ion channel FluC 1</fullName>
    </recommendedName>
</protein>
<keyword id="KW-1003">Cell membrane</keyword>
<keyword id="KW-0407">Ion channel</keyword>
<keyword id="KW-0406">Ion transport</keyword>
<keyword id="KW-0472">Membrane</keyword>
<keyword id="KW-0479">Metal-binding</keyword>
<keyword id="KW-1185">Reference proteome</keyword>
<keyword id="KW-0915">Sodium</keyword>
<keyword id="KW-0812">Transmembrane</keyword>
<keyword id="KW-1133">Transmembrane helix</keyword>
<keyword id="KW-0813">Transport</keyword>
<gene>
    <name evidence="1" type="primary">fluC1</name>
    <name evidence="1" type="synonym">crcB1</name>
    <name type="ordered locus">SAV_1320</name>
</gene>
<proteinExistence type="inferred from homology"/>
<dbReference type="EMBL" id="BA000030">
    <property type="protein sequence ID" value="BAC69030.1"/>
    <property type="molecule type" value="Genomic_DNA"/>
</dbReference>
<dbReference type="SMR" id="Q82NI3"/>
<dbReference type="GeneID" id="41538418"/>
<dbReference type="KEGG" id="sma:SAVERM_1320"/>
<dbReference type="eggNOG" id="COG0239">
    <property type="taxonomic scope" value="Bacteria"/>
</dbReference>
<dbReference type="HOGENOM" id="CLU_114342_2_1_11"/>
<dbReference type="OrthoDB" id="5148600at2"/>
<dbReference type="Proteomes" id="UP000000428">
    <property type="component" value="Chromosome"/>
</dbReference>
<dbReference type="GO" id="GO:0005886">
    <property type="term" value="C:plasma membrane"/>
    <property type="evidence" value="ECO:0007669"/>
    <property type="project" value="UniProtKB-SubCell"/>
</dbReference>
<dbReference type="GO" id="GO:0062054">
    <property type="term" value="F:fluoride channel activity"/>
    <property type="evidence" value="ECO:0007669"/>
    <property type="project" value="UniProtKB-UniRule"/>
</dbReference>
<dbReference type="GO" id="GO:0046872">
    <property type="term" value="F:metal ion binding"/>
    <property type="evidence" value="ECO:0007669"/>
    <property type="project" value="UniProtKB-KW"/>
</dbReference>
<dbReference type="GO" id="GO:0140114">
    <property type="term" value="P:cellular detoxification of fluoride"/>
    <property type="evidence" value="ECO:0007669"/>
    <property type="project" value="UniProtKB-UniRule"/>
</dbReference>
<dbReference type="HAMAP" id="MF_00454">
    <property type="entry name" value="FluC"/>
    <property type="match status" value="1"/>
</dbReference>
<dbReference type="InterPro" id="IPR003691">
    <property type="entry name" value="FluC"/>
</dbReference>
<dbReference type="NCBIfam" id="TIGR00494">
    <property type="entry name" value="crcB"/>
    <property type="match status" value="1"/>
</dbReference>
<dbReference type="PANTHER" id="PTHR28259">
    <property type="entry name" value="FLUORIDE EXPORT PROTEIN 1-RELATED"/>
    <property type="match status" value="1"/>
</dbReference>
<dbReference type="PANTHER" id="PTHR28259:SF1">
    <property type="entry name" value="FLUORIDE EXPORT PROTEIN 1-RELATED"/>
    <property type="match status" value="1"/>
</dbReference>
<dbReference type="Pfam" id="PF02537">
    <property type="entry name" value="CRCB"/>
    <property type="match status" value="1"/>
</dbReference>
<name>FLUC1_STRAW</name>
<accession>Q82NI3</accession>
<comment type="function">
    <text evidence="1">Fluoride-specific ion channel. Important for reducing fluoride concentration in the cell, thus reducing its toxicity.</text>
</comment>
<comment type="catalytic activity">
    <reaction evidence="1">
        <text>fluoride(in) = fluoride(out)</text>
        <dbReference type="Rhea" id="RHEA:76159"/>
        <dbReference type="ChEBI" id="CHEBI:17051"/>
    </reaction>
    <physiologicalReaction direction="left-to-right" evidence="1">
        <dbReference type="Rhea" id="RHEA:76160"/>
    </physiologicalReaction>
</comment>
<comment type="activity regulation">
    <text evidence="1">Na(+) is not transported, but it plays an essential structural role and its presence is essential for fluoride channel function.</text>
</comment>
<comment type="subcellular location">
    <subcellularLocation>
        <location evidence="1">Cell membrane</location>
        <topology evidence="1">Multi-pass membrane protein</topology>
    </subcellularLocation>
</comment>
<comment type="similarity">
    <text evidence="1">Belongs to the fluoride channel Fluc/FEX (TC 1.A.43) family.</text>
</comment>
<feature type="chain" id="PRO_0000110189" description="Fluoride-specific ion channel FluC 1">
    <location>
        <begin position="1"/>
        <end position="124"/>
    </location>
</feature>
<feature type="transmembrane region" description="Helical" evidence="1">
    <location>
        <begin position="1"/>
        <end position="21"/>
    </location>
</feature>
<feature type="transmembrane region" description="Helical" evidence="1">
    <location>
        <begin position="30"/>
        <end position="50"/>
    </location>
</feature>
<feature type="transmembrane region" description="Helical" evidence="1">
    <location>
        <begin position="56"/>
        <end position="76"/>
    </location>
</feature>
<feature type="transmembrane region" description="Helical" evidence="1">
    <location>
        <begin position="102"/>
        <end position="122"/>
    </location>
</feature>
<feature type="binding site" evidence="1">
    <location>
        <position position="73"/>
    </location>
    <ligand>
        <name>Na(+)</name>
        <dbReference type="ChEBI" id="CHEBI:29101"/>
        <note>structural</note>
    </ligand>
</feature>
<feature type="binding site" evidence="1">
    <location>
        <position position="76"/>
    </location>
    <ligand>
        <name>Na(+)</name>
        <dbReference type="ChEBI" id="CHEBI:29101"/>
        <note>structural</note>
    </ligand>
</feature>